<name>SH_HRSVB</name>
<dbReference type="EMBL" id="AF013254">
    <property type="protein sequence ID" value="AAB82434.1"/>
    <property type="molecule type" value="Genomic_RNA"/>
</dbReference>
<dbReference type="RefSeq" id="NP_056861.1">
    <property type="nucleotide sequence ID" value="NC_001781.1"/>
</dbReference>
<dbReference type="SMR" id="O36632"/>
<dbReference type="TCDB" id="1.A.68.1.3">
    <property type="family name" value="the viral small hydrophobic viroporin (v-sh) family"/>
</dbReference>
<dbReference type="GlyCosmos" id="O36632">
    <property type="glycosylation" value="1 site, No reported glycans"/>
</dbReference>
<dbReference type="GeneID" id="1489823"/>
<dbReference type="KEGG" id="vg:1489823"/>
<dbReference type="Proteomes" id="UP000002472">
    <property type="component" value="Segment"/>
</dbReference>
<dbReference type="GO" id="GO:0044167">
    <property type="term" value="C:host cell endoplasmic reticulum membrane"/>
    <property type="evidence" value="ECO:0007669"/>
    <property type="project" value="UniProtKB-SubCell"/>
</dbReference>
<dbReference type="GO" id="GO:0044178">
    <property type="term" value="C:host cell Golgi membrane"/>
    <property type="evidence" value="ECO:0007669"/>
    <property type="project" value="UniProtKB-SubCell"/>
</dbReference>
<dbReference type="GO" id="GO:0020002">
    <property type="term" value="C:host cell plasma membrane"/>
    <property type="evidence" value="ECO:0007669"/>
    <property type="project" value="UniProtKB-SubCell"/>
</dbReference>
<dbReference type="GO" id="GO:0016020">
    <property type="term" value="C:membrane"/>
    <property type="evidence" value="ECO:0007669"/>
    <property type="project" value="UniProtKB-KW"/>
</dbReference>
<dbReference type="GO" id="GO:0055036">
    <property type="term" value="C:virion membrane"/>
    <property type="evidence" value="ECO:0007669"/>
    <property type="project" value="UniProtKB-SubCell"/>
</dbReference>
<dbReference type="GO" id="GO:0015267">
    <property type="term" value="F:channel activity"/>
    <property type="evidence" value="ECO:0007669"/>
    <property type="project" value="UniProtKB-KW"/>
</dbReference>
<dbReference type="GO" id="GO:0034220">
    <property type="term" value="P:monoatomic ion transmembrane transport"/>
    <property type="evidence" value="ECO:0007669"/>
    <property type="project" value="UniProtKB-KW"/>
</dbReference>
<dbReference type="GO" id="GO:0052151">
    <property type="term" value="P:symbiont-mediated activation of host apoptosis"/>
    <property type="evidence" value="ECO:0007669"/>
    <property type="project" value="UniProtKB-KW"/>
</dbReference>
<dbReference type="InterPro" id="IPR005327">
    <property type="entry name" value="SHP"/>
</dbReference>
<dbReference type="Pfam" id="PF03579">
    <property type="entry name" value="SHP"/>
    <property type="match status" value="1"/>
</dbReference>
<accession>O36632</accession>
<protein>
    <recommendedName>
        <fullName evidence="1">Small hydrophobic protein</fullName>
    </recommendedName>
    <alternativeName>
        <fullName>Small protein 1A</fullName>
    </alternativeName>
</protein>
<gene>
    <name evidence="1" type="primary">SH</name>
    <name evidence="1" type="synonym">1A</name>
</gene>
<feature type="chain" id="PRO_0000365796" description="Small hydrophobic protein">
    <location>
        <begin position="1"/>
        <end position="65"/>
    </location>
</feature>
<feature type="topological domain" description="Intravirion" evidence="1">
    <location>
        <begin position="1"/>
        <end position="20"/>
    </location>
</feature>
<feature type="transmembrane region" description="Helical; Signal-anchor for type II membrane protein" evidence="1">
    <location>
        <begin position="21"/>
        <end position="44"/>
    </location>
</feature>
<feature type="topological domain" description="Virion surface" evidence="1">
    <location>
        <begin position="45"/>
        <end position="65"/>
    </location>
</feature>
<feature type="region of interest" description="Interaction with host BCAP31" evidence="1">
    <location>
        <begin position="6"/>
        <end position="15"/>
    </location>
</feature>
<feature type="region of interest" description="Interaction with small-molecule inhibitor" evidence="1">
    <location>
        <begin position="38"/>
        <end position="43"/>
    </location>
</feature>
<feature type="site" description="Involved in opening and closing mechanism of the pentameric structure" evidence="1">
    <location>
        <position position="22"/>
    </location>
</feature>
<feature type="glycosylation site" description="N-linked (GlcNAc...) asparagine; by host" evidence="2">
    <location>
        <position position="52"/>
    </location>
</feature>
<reference key="1">
    <citation type="journal article" date="1997" name="Proc. Natl. Acad. Sci. U.S.A.">
        <title>Respiratory syncytial virus (RSV) SH and G proteins are not essential for viral replication in vitro: clinical evaluation and molecular characterization of a cold-passaged, attenuated RSV subgroup B mutant.</title>
        <authorList>
            <person name="Karron R.A."/>
            <person name="Buonagurio D.A."/>
            <person name="Georgiu A.F."/>
            <person name="Whitehead S.S."/>
            <person name="Adamus J.E."/>
            <person name="Clements-Mann M.L."/>
            <person name="Harris D.O."/>
            <person name="Randolph V.B."/>
            <person name="Udem S.A."/>
            <person name="Murphy B.R."/>
            <person name="Sidhu M.S."/>
        </authorList>
    </citation>
    <scope>NUCLEOTIDE SEQUENCE [GENOMIC RNA]</scope>
</reference>
<organismHost>
    <name type="scientific">Homo sapiens</name>
    <name type="common">Human</name>
    <dbReference type="NCBI Taxonomy" id="9606"/>
</organismHost>
<sequence length="65" mass="7511">MGNTSITIEFTSKFWPYFTLIHMILTLISLLIIITIMIAILNKLSEHKTFCNNTLELGQMHQINT</sequence>
<proteinExistence type="inferred from homology"/>
<comment type="function">
    <text evidence="1">Viroporin that forms a homopentameric ion channel displaying low ion selectivity. May play a role in virus morphogenesis and pathogenicity at various stages of the viral life cycle. Accumulates at the membrane of the Golgi apparatus in infected cells and may facilitate virus release by modifying the secretory pathway. May enhance host membrane permeability and disrupt cellular ion homeostasis, which can be sensed as damage-associated molecular patterns/danger signals, triggering NLRP3 inflammasome activation and inflammatory immune response. Also inhibits host TNFA-mediated signaling pathway and may delay apoptosis, allowing time for the virus to replicate.</text>
</comment>
<comment type="activity regulation">
    <text evidence="1">Channel activity is inhibited by copper. Also inhibited by small-molecule pyronin B.</text>
</comment>
<comment type="subunit">
    <text evidence="1">Homopentamer forming a funnel-like pore. Interacts with glycoprotein G; this interaction occurs on the surface of virion particles and infected cells. Interacts with host BCAP31 (via C-terminus); this interaction is direct.</text>
</comment>
<comment type="subcellular location">
    <subcellularLocation>
        <location evidence="1">Virion membrane</location>
        <topology evidence="1">Single-pass type II membrane protein</topology>
    </subcellularLocation>
    <subcellularLocation>
        <location evidence="1">Host cell membrane</location>
        <topology evidence="1">Single-pass type II membrane protein</topology>
    </subcellularLocation>
    <subcellularLocation>
        <location evidence="1">Host Golgi apparatus membrane</location>
        <topology evidence="1">Single-pass type II membrane protein</topology>
    </subcellularLocation>
    <subcellularLocation>
        <location evidence="1">Host endoplasmic reticulum membrane</location>
        <topology evidence="1">Single-pass type II membrane protein</topology>
    </subcellularLocation>
    <text evidence="1">Present in very small amount in the virion. Detected in lipid rafts of host Golgi apparatus membrane.</text>
</comment>
<comment type="PTM">
    <text evidence="1">Four species of SH have been detected in infected cell cytoplasm: a 7.5 kDa non-glycosylated form (SH0), a 13-15 kDa form that contains one or two N-linked carbohydrate side chains of the high-mannose type (SHg), a 21-30 kDa polylactosaminoglycan-modified form of the protein (SHp), and the isoform generated by alternative translational initiation. Of these different forms, SH0 is by far the most abundant protein detected during virus infection.</text>
</comment>
<comment type="PTM">
    <text evidence="1">Tyrosine phosphorylated.</text>
</comment>
<comment type="similarity">
    <text evidence="3">Belongs to the orthopneumovirus small hydrophobic protein family.</text>
</comment>
<organism>
    <name type="scientific">Human respiratory syncytial virus B (strain B1)</name>
    <dbReference type="NCBI Taxonomy" id="79692"/>
    <lineage>
        <taxon>Viruses</taxon>
        <taxon>Riboviria</taxon>
        <taxon>Orthornavirae</taxon>
        <taxon>Negarnaviricota</taxon>
        <taxon>Haploviricotina</taxon>
        <taxon>Monjiviricetes</taxon>
        <taxon>Mononegavirales</taxon>
        <taxon>Pneumoviridae</taxon>
        <taxon>Orthopneumovirus</taxon>
        <taxon>Orthopneumovirus hominis</taxon>
    </lineage>
</organism>
<evidence type="ECO:0000250" key="1">
    <source>
        <dbReference type="UniProtKB" id="P0DOE5"/>
    </source>
</evidence>
<evidence type="ECO:0000255" key="2"/>
<evidence type="ECO:0000305" key="3"/>
<keyword id="KW-1073">Activation of host caspases by virus</keyword>
<keyword id="KW-0325">Glycoprotein</keyword>
<keyword id="KW-1032">Host cell membrane</keyword>
<keyword id="KW-1038">Host endoplasmic reticulum</keyword>
<keyword id="KW-1040">Host Golgi apparatus</keyword>
<keyword id="KW-1043">Host membrane</keyword>
<keyword id="KW-0945">Host-virus interaction</keyword>
<keyword id="KW-0407">Ion channel</keyword>
<keyword id="KW-0406">Ion transport</keyword>
<keyword id="KW-0472">Membrane</keyword>
<keyword id="KW-1119">Modulation of host cell apoptosis by virus</keyword>
<keyword id="KW-0597">Phosphoprotein</keyword>
<keyword id="KW-1185">Reference proteome</keyword>
<keyword id="KW-0735">Signal-anchor</keyword>
<keyword id="KW-0812">Transmembrane</keyword>
<keyword id="KW-1133">Transmembrane helix</keyword>
<keyword id="KW-0813">Transport</keyword>
<keyword id="KW-1182">Viral ion channel</keyword>
<keyword id="KW-0946">Virion</keyword>